<gene>
    <name type="primary">Ankef1</name>
    <name type="synonym">Ankrd5</name>
</gene>
<accession>Q9D2J7</accession>
<accession>Q0VB20</accession>
<proteinExistence type="evidence at transcript level"/>
<name>ANKE1_MOUSE</name>
<organism>
    <name type="scientific">Mus musculus</name>
    <name type="common">Mouse</name>
    <dbReference type="NCBI Taxonomy" id="10090"/>
    <lineage>
        <taxon>Eukaryota</taxon>
        <taxon>Metazoa</taxon>
        <taxon>Chordata</taxon>
        <taxon>Craniata</taxon>
        <taxon>Vertebrata</taxon>
        <taxon>Euteleostomi</taxon>
        <taxon>Mammalia</taxon>
        <taxon>Eutheria</taxon>
        <taxon>Euarchontoglires</taxon>
        <taxon>Glires</taxon>
        <taxon>Rodentia</taxon>
        <taxon>Myomorpha</taxon>
        <taxon>Muroidea</taxon>
        <taxon>Muridae</taxon>
        <taxon>Murinae</taxon>
        <taxon>Mus</taxon>
        <taxon>Mus</taxon>
    </lineage>
</organism>
<feature type="chain" id="PRO_0000066900" description="Ankyrin repeat and EF-hand domain-containing protein 1">
    <location>
        <begin position="1"/>
        <end position="775"/>
    </location>
</feature>
<feature type="repeat" description="ANK 1">
    <location>
        <begin position="47"/>
        <end position="76"/>
    </location>
</feature>
<feature type="repeat" description="ANK 2">
    <location>
        <begin position="184"/>
        <end position="213"/>
    </location>
</feature>
<feature type="repeat" description="ANK 3">
    <location>
        <begin position="217"/>
        <end position="246"/>
    </location>
</feature>
<feature type="repeat" description="ANK 4">
    <location>
        <begin position="250"/>
        <end position="279"/>
    </location>
</feature>
<feature type="repeat" description="ANK 5">
    <location>
        <begin position="524"/>
        <end position="553"/>
    </location>
</feature>
<feature type="repeat" description="ANK 6">
    <location>
        <begin position="557"/>
        <end position="586"/>
    </location>
</feature>
<feature type="repeat" description="ANK 7">
    <location>
        <begin position="590"/>
        <end position="619"/>
    </location>
</feature>
<feature type="repeat" description="ANK 8">
    <location>
        <begin position="623"/>
        <end position="652"/>
    </location>
</feature>
<keyword id="KW-0040">ANK repeat</keyword>
<keyword id="KW-1185">Reference proteome</keyword>
<keyword id="KW-0677">Repeat</keyword>
<protein>
    <recommendedName>
        <fullName>Ankyrin repeat and EF-hand domain-containing protein 1</fullName>
    </recommendedName>
    <alternativeName>
        <fullName>Ankyrin repeat domain-containing protein 5</fullName>
    </alternativeName>
</protein>
<reference key="1">
    <citation type="journal article" date="2005" name="Science">
        <title>The transcriptional landscape of the mammalian genome.</title>
        <authorList>
            <person name="Carninci P."/>
            <person name="Kasukawa T."/>
            <person name="Katayama S."/>
            <person name="Gough J."/>
            <person name="Frith M.C."/>
            <person name="Maeda N."/>
            <person name="Oyama R."/>
            <person name="Ravasi T."/>
            <person name="Lenhard B."/>
            <person name="Wells C."/>
            <person name="Kodzius R."/>
            <person name="Shimokawa K."/>
            <person name="Bajic V.B."/>
            <person name="Brenner S.E."/>
            <person name="Batalov S."/>
            <person name="Forrest A.R."/>
            <person name="Zavolan M."/>
            <person name="Davis M.J."/>
            <person name="Wilming L.G."/>
            <person name="Aidinis V."/>
            <person name="Allen J.E."/>
            <person name="Ambesi-Impiombato A."/>
            <person name="Apweiler R."/>
            <person name="Aturaliya R.N."/>
            <person name="Bailey T.L."/>
            <person name="Bansal M."/>
            <person name="Baxter L."/>
            <person name="Beisel K.W."/>
            <person name="Bersano T."/>
            <person name="Bono H."/>
            <person name="Chalk A.M."/>
            <person name="Chiu K.P."/>
            <person name="Choudhary V."/>
            <person name="Christoffels A."/>
            <person name="Clutterbuck D.R."/>
            <person name="Crowe M.L."/>
            <person name="Dalla E."/>
            <person name="Dalrymple B.P."/>
            <person name="de Bono B."/>
            <person name="Della Gatta G."/>
            <person name="di Bernardo D."/>
            <person name="Down T."/>
            <person name="Engstrom P."/>
            <person name="Fagiolini M."/>
            <person name="Faulkner G."/>
            <person name="Fletcher C.F."/>
            <person name="Fukushima T."/>
            <person name="Furuno M."/>
            <person name="Futaki S."/>
            <person name="Gariboldi M."/>
            <person name="Georgii-Hemming P."/>
            <person name="Gingeras T.R."/>
            <person name="Gojobori T."/>
            <person name="Green R.E."/>
            <person name="Gustincich S."/>
            <person name="Harbers M."/>
            <person name="Hayashi Y."/>
            <person name="Hensch T.K."/>
            <person name="Hirokawa N."/>
            <person name="Hill D."/>
            <person name="Huminiecki L."/>
            <person name="Iacono M."/>
            <person name="Ikeo K."/>
            <person name="Iwama A."/>
            <person name="Ishikawa T."/>
            <person name="Jakt M."/>
            <person name="Kanapin A."/>
            <person name="Katoh M."/>
            <person name="Kawasawa Y."/>
            <person name="Kelso J."/>
            <person name="Kitamura H."/>
            <person name="Kitano H."/>
            <person name="Kollias G."/>
            <person name="Krishnan S.P."/>
            <person name="Kruger A."/>
            <person name="Kummerfeld S.K."/>
            <person name="Kurochkin I.V."/>
            <person name="Lareau L.F."/>
            <person name="Lazarevic D."/>
            <person name="Lipovich L."/>
            <person name="Liu J."/>
            <person name="Liuni S."/>
            <person name="McWilliam S."/>
            <person name="Madan Babu M."/>
            <person name="Madera M."/>
            <person name="Marchionni L."/>
            <person name="Matsuda H."/>
            <person name="Matsuzawa S."/>
            <person name="Miki H."/>
            <person name="Mignone F."/>
            <person name="Miyake S."/>
            <person name="Morris K."/>
            <person name="Mottagui-Tabar S."/>
            <person name="Mulder N."/>
            <person name="Nakano N."/>
            <person name="Nakauchi H."/>
            <person name="Ng P."/>
            <person name="Nilsson R."/>
            <person name="Nishiguchi S."/>
            <person name="Nishikawa S."/>
            <person name="Nori F."/>
            <person name="Ohara O."/>
            <person name="Okazaki Y."/>
            <person name="Orlando V."/>
            <person name="Pang K.C."/>
            <person name="Pavan W.J."/>
            <person name="Pavesi G."/>
            <person name="Pesole G."/>
            <person name="Petrovsky N."/>
            <person name="Piazza S."/>
            <person name="Reed J."/>
            <person name="Reid J.F."/>
            <person name="Ring B.Z."/>
            <person name="Ringwald M."/>
            <person name="Rost B."/>
            <person name="Ruan Y."/>
            <person name="Salzberg S.L."/>
            <person name="Sandelin A."/>
            <person name="Schneider C."/>
            <person name="Schoenbach C."/>
            <person name="Sekiguchi K."/>
            <person name="Semple C.A."/>
            <person name="Seno S."/>
            <person name="Sessa L."/>
            <person name="Sheng Y."/>
            <person name="Shibata Y."/>
            <person name="Shimada H."/>
            <person name="Shimada K."/>
            <person name="Silva D."/>
            <person name="Sinclair B."/>
            <person name="Sperling S."/>
            <person name="Stupka E."/>
            <person name="Sugiura K."/>
            <person name="Sultana R."/>
            <person name="Takenaka Y."/>
            <person name="Taki K."/>
            <person name="Tammoja K."/>
            <person name="Tan S.L."/>
            <person name="Tang S."/>
            <person name="Taylor M.S."/>
            <person name="Tegner J."/>
            <person name="Teichmann S.A."/>
            <person name="Ueda H.R."/>
            <person name="van Nimwegen E."/>
            <person name="Verardo R."/>
            <person name="Wei C.L."/>
            <person name="Yagi K."/>
            <person name="Yamanishi H."/>
            <person name="Zabarovsky E."/>
            <person name="Zhu S."/>
            <person name="Zimmer A."/>
            <person name="Hide W."/>
            <person name="Bult C."/>
            <person name="Grimmond S.M."/>
            <person name="Teasdale R.D."/>
            <person name="Liu E.T."/>
            <person name="Brusic V."/>
            <person name="Quackenbush J."/>
            <person name="Wahlestedt C."/>
            <person name="Mattick J.S."/>
            <person name="Hume D.A."/>
            <person name="Kai C."/>
            <person name="Sasaki D."/>
            <person name="Tomaru Y."/>
            <person name="Fukuda S."/>
            <person name="Kanamori-Katayama M."/>
            <person name="Suzuki M."/>
            <person name="Aoki J."/>
            <person name="Arakawa T."/>
            <person name="Iida J."/>
            <person name="Imamura K."/>
            <person name="Itoh M."/>
            <person name="Kato T."/>
            <person name="Kawaji H."/>
            <person name="Kawagashira N."/>
            <person name="Kawashima T."/>
            <person name="Kojima M."/>
            <person name="Kondo S."/>
            <person name="Konno H."/>
            <person name="Nakano K."/>
            <person name="Ninomiya N."/>
            <person name="Nishio T."/>
            <person name="Okada M."/>
            <person name="Plessy C."/>
            <person name="Shibata K."/>
            <person name="Shiraki T."/>
            <person name="Suzuki S."/>
            <person name="Tagami M."/>
            <person name="Waki K."/>
            <person name="Watahiki A."/>
            <person name="Okamura-Oho Y."/>
            <person name="Suzuki H."/>
            <person name="Kawai J."/>
            <person name="Hayashizaki Y."/>
        </authorList>
    </citation>
    <scope>NUCLEOTIDE SEQUENCE [LARGE SCALE MRNA]</scope>
    <source>
        <strain>C57BL/6J</strain>
        <tissue>Testis</tissue>
    </source>
</reference>
<reference key="2">
    <citation type="journal article" date="2004" name="Genome Res.">
        <title>The status, quality, and expansion of the NIH full-length cDNA project: the Mammalian Gene Collection (MGC).</title>
        <authorList>
            <consortium name="The MGC Project Team"/>
        </authorList>
    </citation>
    <scope>NUCLEOTIDE SEQUENCE [LARGE SCALE MRNA]</scope>
    <source>
        <tissue>Testis</tissue>
    </source>
</reference>
<dbReference type="EMBL" id="AK019547">
    <property type="protein sequence ID" value="BAB31791.1"/>
    <property type="molecule type" value="mRNA"/>
</dbReference>
<dbReference type="EMBL" id="AK029804">
    <property type="protein sequence ID" value="BAC26624.1"/>
    <property type="molecule type" value="mRNA"/>
</dbReference>
<dbReference type="EMBL" id="BC120825">
    <property type="protein sequence ID" value="AAI20826.1"/>
    <property type="molecule type" value="mRNA"/>
</dbReference>
<dbReference type="CCDS" id="CCDS38249.1"/>
<dbReference type="RefSeq" id="NP_783598.1">
    <property type="nucleotide sequence ID" value="NM_175667.4"/>
</dbReference>
<dbReference type="SMR" id="Q9D2J7"/>
<dbReference type="BioGRID" id="235113">
    <property type="interactions" value="1"/>
</dbReference>
<dbReference type="FunCoup" id="Q9D2J7">
    <property type="interactions" value="11"/>
</dbReference>
<dbReference type="STRING" id="10090.ENSMUSP00000113881"/>
<dbReference type="iPTMnet" id="Q9D2J7"/>
<dbReference type="PhosphoSitePlus" id="Q9D2J7"/>
<dbReference type="PaxDb" id="10090-ENSMUSP00000113881"/>
<dbReference type="ProteomicsDB" id="281981"/>
<dbReference type="Antibodypedia" id="35178">
    <property type="antibodies" value="99 antibodies from 15 providers"/>
</dbReference>
<dbReference type="DNASU" id="319196"/>
<dbReference type="Ensembl" id="ENSMUST00000028726.9">
    <property type="protein sequence ID" value="ENSMUSP00000028726.3"/>
    <property type="gene ID" value="ENSMUSG00000074771.11"/>
</dbReference>
<dbReference type="Ensembl" id="ENSMUST00000121717.2">
    <property type="protein sequence ID" value="ENSMUSP00000113881.2"/>
    <property type="gene ID" value="ENSMUSG00000074771.11"/>
</dbReference>
<dbReference type="Ensembl" id="ENSMUST00000180246.8">
    <property type="protein sequence ID" value="ENSMUSP00000135947.2"/>
    <property type="gene ID" value="ENSMUSG00000074771.11"/>
</dbReference>
<dbReference type="GeneID" id="319196"/>
<dbReference type="KEGG" id="mmu:319196"/>
<dbReference type="UCSC" id="uc008mom.1">
    <property type="organism name" value="mouse"/>
</dbReference>
<dbReference type="AGR" id="MGI:2441685"/>
<dbReference type="CTD" id="63926"/>
<dbReference type="MGI" id="MGI:2441685">
    <property type="gene designation" value="Ankef1"/>
</dbReference>
<dbReference type="VEuPathDB" id="HostDB:ENSMUSG00000074771"/>
<dbReference type="eggNOG" id="KOG4177">
    <property type="taxonomic scope" value="Eukaryota"/>
</dbReference>
<dbReference type="GeneTree" id="ENSGT00940000156852"/>
<dbReference type="HOGENOM" id="CLU_020261_0_0_1"/>
<dbReference type="InParanoid" id="Q9D2J7"/>
<dbReference type="OMA" id="ATDNFMW"/>
<dbReference type="OrthoDB" id="539213at2759"/>
<dbReference type="PhylomeDB" id="Q9D2J7"/>
<dbReference type="TreeFam" id="TF351260"/>
<dbReference type="BioGRID-ORCS" id="319196">
    <property type="hits" value="2 hits in 76 CRISPR screens"/>
</dbReference>
<dbReference type="ChiTaRS" id="Ankef1">
    <property type="organism name" value="mouse"/>
</dbReference>
<dbReference type="PRO" id="PR:Q9D2J7"/>
<dbReference type="Proteomes" id="UP000000589">
    <property type="component" value="Chromosome 2"/>
</dbReference>
<dbReference type="RNAct" id="Q9D2J7">
    <property type="molecule type" value="protein"/>
</dbReference>
<dbReference type="Bgee" id="ENSMUSG00000074771">
    <property type="expression patterns" value="Expressed in seminiferous tubule of testis and 64 other cell types or tissues"/>
</dbReference>
<dbReference type="ExpressionAtlas" id="Q9D2J7">
    <property type="expression patterns" value="baseline and differential"/>
</dbReference>
<dbReference type="Gene3D" id="1.25.40.20">
    <property type="entry name" value="Ankyrin repeat-containing domain"/>
    <property type="match status" value="3"/>
</dbReference>
<dbReference type="Gene3D" id="1.10.238.10">
    <property type="entry name" value="EF-hand"/>
    <property type="match status" value="1"/>
</dbReference>
<dbReference type="InterPro" id="IPR052801">
    <property type="entry name" value="Ankyrin-EF-hand"/>
</dbReference>
<dbReference type="InterPro" id="IPR002110">
    <property type="entry name" value="Ankyrin_rpt"/>
</dbReference>
<dbReference type="InterPro" id="IPR036770">
    <property type="entry name" value="Ankyrin_rpt-contain_sf"/>
</dbReference>
<dbReference type="InterPro" id="IPR011992">
    <property type="entry name" value="EF-hand-dom_pair"/>
</dbReference>
<dbReference type="PANTHER" id="PTHR24127">
    <property type="entry name" value="ANKYRIN REPEAT AND EF-HAND DOMAIN-CONTAINING PROTEIN 1"/>
    <property type="match status" value="1"/>
</dbReference>
<dbReference type="PANTHER" id="PTHR24127:SF1">
    <property type="entry name" value="ANKYRIN REPEAT AND EF-HAND DOMAIN-CONTAINING PROTEIN 1"/>
    <property type="match status" value="1"/>
</dbReference>
<dbReference type="Pfam" id="PF12796">
    <property type="entry name" value="Ank_2"/>
    <property type="match status" value="3"/>
</dbReference>
<dbReference type="PRINTS" id="PR01415">
    <property type="entry name" value="ANKYRIN"/>
</dbReference>
<dbReference type="SMART" id="SM00248">
    <property type="entry name" value="ANK"/>
    <property type="match status" value="10"/>
</dbReference>
<dbReference type="SUPFAM" id="SSF48403">
    <property type="entry name" value="Ankyrin repeat"/>
    <property type="match status" value="2"/>
</dbReference>
<dbReference type="SUPFAM" id="SSF47473">
    <property type="entry name" value="EF-hand"/>
    <property type="match status" value="1"/>
</dbReference>
<dbReference type="PROSITE" id="PS50297">
    <property type="entry name" value="ANK_REP_REGION"/>
    <property type="match status" value="1"/>
</dbReference>
<dbReference type="PROSITE" id="PS50088">
    <property type="entry name" value="ANK_REPEAT"/>
    <property type="match status" value="6"/>
</dbReference>
<sequence length="775" mass="86904">MALADKRLENLQIYRVLQCVRNKDKKQIEKLTRLGYPELINFTEPIDGLSALHLASISNDTDMVSFLLKLGAHPDVQDHMGCTPTMRAAELGHELSMEILAKAKADMTIVDNEGKGVLFYCILPTKRHYRCSLIALEHGADVNNITYEGKPVFLRACEEAHDVKDMCLTFLEKGANPNAINTSTGRTALMESSREGVLEIVRGILERGGEVNAYDNDRHHAAHFAAKGGFFDILKLLFAYNGDMGLIGMDGNTPLHFAAMGGFADCCKYIAQRGCDLKWKNLEHKTPRVVAKDGGFKAASKEIRRAERTAAKLAKTGAKNPNPLWALRLHDWSIEHETSLRNAFKFVDRGDGVVSKDDFVVALEERQEYATSEQLLSVAQMHEKSRGGGVNINEFFKGTKYLSKSYVLGSFGPKKKKRGLGKKPRKGKFVLPLPICTIPENAFPRRPDGGPPYYMIETYQNVSDSHRFNRDHPPEHPIQDDSEWYIDDPSRVFANISFITKAGDLASLKKAIETGIPVDMKDNTYKTPLMIACASGNIDVVKFLIEKGANVNATDNFLWTPLHFACHAGQQDIVELLVKAGASIDATSINNSTPLSRAIESCRLDTVKYLLDMGAKFQIENRKGHAAMDIAKAYADYRIIDMIKEKLDNLPKQADNQKMKGKLPKLKTEGTDVKKEEETLSSIYTVPAITEEKKVHRDSVVYLNSLITSGFTKKVDITFIPKRIWSPEATTAELIRKRELRRERFTYEVDFEDFMMPFQKNITEKAQALEATLKN</sequence>